<proteinExistence type="evidence at transcript level"/>
<sequence length="3461" mass="406398">MATRRAGRSWEVSPTERRPSARPRNSAAEEAAASPPVLSLSHFCRSPFLCFGDVRLGASRTLPLALDNPNEEVAEVKIAHFPAAEQGFSISPRSFELQPKEKIIISVNWTPLKEGRVREIVTFLVNDILKHQAILLGNAEEKKKKKRSLWDTINKKKMSTSSSDKRNSYIQNVNTTFCVSQKADRVRSPLQACENLAMKEGCFLTENNSLSLEENKIPISPISPIFKECHGETSLPLSVRRSTTYTSLHACENGELLKVEGADGSEDFNFNEKVTSETSFSSIHNMSGQIEENSKLILTPTCCSTLNITQSQGNFLSPDSFVNNSHAANNEPEVATCLSLDTFRKDNSSPVHLESKTVHKTYRTILSPDSFINDNYGLNQDLEPESINPILSPNQFVKDNMAYICISQQTCKLSSLSNKNSQVSQSPQDQRTNGVLPCFRECQGSQSPEAIFEESRTLEMKSDCYSFTKNQPKFPVIQNISSYSHDKRTRRPILSATVTKSKSICSRENQTEANKPKAKRCLNSVAGEFEKPTDTQNEKSGFQSCLPVIDPVFSKSKSYKNAVIPSSKTALVARKRKSEGNKEDANVRVTVTEHTEVREIKRIHFSPVESKMATVKKTKKMITPISKHISYREKSNLRKKTDSLVYRTPHSKTNKRTKPVVAVAQSTLTFIKPLKTDIPRHPMPFAAKNMFYDERWKEKQEQGFTWWLNFILTPDDFTVKTNISEVNAATLLLGVESQHKISVARAPTKDEMSLRAYTARCRLNRLRRAACRLFTSENMVKAIKKLEIEIEARRLIVRKDRHLWKDVGERQKVLNWLLSYNPLWLRIGLETIYGELISLEDNSDVTGLAVFILNRLLWNPDIAAEYRHPSVPHLYRDGHEEALSKFTLKKLLLLVCFLDYAKISRLIDHDPCLFCKDAEFKTSKEILLAFSRDFLSGEGDLSRHLSFLGLPVNHVQTPFDEFDFAVTNLAVDLQCGVRLVRIMELLTRDWNLSKKLRIPAISRLQKMHNVDIVLQILRSRGIQLNDEHGNAILSKDIVDRHREKTLTLLWKIAFAFQVDISLNLDQLKEEIDFLKHTQSLKKTTSALSCHSDAIINKEKDKRNSGSFERYSESIKLLMDWVNAVCAFYNKKVENFTVSFSDGRVLCYLIHHYHPYYVPFDAICQRTTQTVECTQTGSVVLNSSSESDGSSLDLSLKALDHENTSELYKELLENEKRNFQLVRSAVRDLGGIPAMIHHSDMSNTIPDEKVVITYLSFLCARLLDLCKETRAARLIQTTWRKYKQKTDLKRHQERDKAARIIQSAVISFLSKQRLKKEINAALAIQKHWRRLLAQRKLLMLKKEKLEKVQNKSALVIQRYWRRYSTRKQFLKLKYYSVILQSRIRMILAVTSYKRYLWATVTIQRHWLAYLRRKRDQQRYEMLKSSCLIIQSVFRRWKQHKMRLQIKATIILQRAFREWHVRKRAKEEKSAVVIQSWYRMHKELRKYIHLRSCVVIIQTRFRCLQAQKSYKRRREAILTIQKFYRAHLKGKTERANYLQKRAAAIQLQAAFRGMKARNLHRQIRAACVFQSYWRMRRDRFRFLNLKKITIKLQAQVRMHQQLQKYKKIKKAALIIQIHLRASVLAKRALASYQKTRSAVIVLQSAYRGMQARRKFIHILTSIIKIQSYYRAYISRKKFLRLKHATVKLQSIVKMKQTRKQYLHLRAATLFIQQWYRSIKVAALKREEYVQMRESCIKLQAFVRGHLVRKQMRSQRKAAVSLQSYFRMRKMRQHYLEMYKAAVVIQNYYRAYKAQVSQRKNFLQVKRAVTCVQAAYRGYKVRQLIKQQSIAALKIQTAFRGYSKRKKYQYVLQSTIKIQTWYRTYRTVRDVRMQFLKTKAAVISLQSAYRGWKVRTQIRRELQAAVRIQSAFRMAQTQKQFRLFKTAALVIQQHLRAWSAGKKQRMEYTELRNAALMLQSTWKGKIVRRQIRKQHKCAVIIQSYYRMHVQQKKWDIMKKAARLIQMYYRAYRIGRRQRQLYLKTKAAIVIIQSAYRSMRVRKKIKEYNKAAVAIQSTYRAYKAKKNYATYRASAVLIQRWYRNIKIANRQRKEYLNLKKTAVKIQAVFRGIRVRRRIQHMHTAATFIKAMFKMHQAKVRYHKMRTAAVLIQVRYRAYCQGKIQRAKYLTILKAVTVLQASFRGVRVRQTLRKMQNAAIRIQSCYRRYRQQTYFNKLKKVTQTVQQRYRAVKERNVQFQRYNKLRHSAICIQAGFRGMKARRHLRMMHLAATLIQRRFRTLKMRRRFLSLRKTALWVQRKYRATVCAKHHLQQFLRLQKAVITLQSSYRGWVVRKKMQEMHRAATVIQAAFRMHRAHVRYQAVRQASVVIQQRHQANRAAKLQRQRYLRQRHSALILQAAFRSMKARRHLKMMHSSAVLIQSRFRGLVVRKRFVSLKKAAVFVQRRYRATTCARRHLHQFLKVQKAVITIQSSYRRLMAKKKVQAMHRAAALIQATYKMHRTYVTFQAWKHASILIQQHYRIYRAAKLQRENYVRQRHSALVIQAAYKGMKARQLLREKHRAAIIIQSTYRMYRQYLFYRKIQWATKVIQKIYRAKKRKALQHDALRKVAACVQADFQDMIIRKQIQEQHQAATVLQKHLKASKVRKHYLHFRAKVVFVQRRYRALSAVRTQAVICIQSSYRGFKVRKGIQRMHLAATLIQSLYRMHRAKLDYRAKKTAVVLIQYYYRSYVRVKTERKNFLALQKSVRIIQAAFRGMKVRQKLKNLSEAKMAAIEKRSAFCRHRTETPYEAVQSSALRIQKWHRASLVACSQEAECHSQGRAAVTIQKAFCKTATEILETQKHAALRIQSFLQMAVYRRRFVQQKRAAVTLQQYFRTWQARKQFLLYRKAASVLQNHHRGFLSAKPQREAYLHVRSSVIIIQARTRGFIQKRKFQKIKDSTIKIQAAWRSYKARKYLCKVKAACKIQAWYRSWKARKEYLAILKAVKVIQGCFYTKLERTRFLNMRASTIIIQRKWRAMLSGRIAHEHFLMIKRHQAACLIQANFRRYKGRQVFLRQKSAALTIQRYIRARKAGKCERIKYVELKKSTVVLQALVRGWLVRKRISEQRTKIRLLHFTAAAYCHLSALRIQRAYKLHMVMKNAKKQVNSVICVQRWFRTRLQQKRFAQKCHSVIKSQRELQEHMSQQNRAASVIQKAVRRFLLRKKKEKINNGITKIQALWRGYSWRKKNDGTKIKAIRLSLQLVNREIREENKLYKRTALALHCLLTYKHLSAILEALKHLEVVTRLSPLCCENMAQSGAVSKIFVLIRSCNRSVPCMEVIRYSVQVLLNVAKYEKTTAAVYHVENCIDTLLDLLQMYREKPGDKVADKGGSIFTKTCCLLAILLKTTNRASDVRSRSKVVDRIYSLYKLTARKHKMNTERILYTQKKNSSISIPFIPETPIRTRIVSRLKPDWVLRRDNMEEIT</sequence>
<organism>
    <name type="scientific">Felis catus</name>
    <name type="common">Cat</name>
    <name type="synonym">Felis silvestris catus</name>
    <dbReference type="NCBI Taxonomy" id="9685"/>
    <lineage>
        <taxon>Eukaryota</taxon>
        <taxon>Metazoa</taxon>
        <taxon>Chordata</taxon>
        <taxon>Craniata</taxon>
        <taxon>Vertebrata</taxon>
        <taxon>Euteleostomi</taxon>
        <taxon>Mammalia</taxon>
        <taxon>Eutheria</taxon>
        <taxon>Laurasiatheria</taxon>
        <taxon>Carnivora</taxon>
        <taxon>Feliformia</taxon>
        <taxon>Felidae</taxon>
        <taxon>Felinae</taxon>
        <taxon>Felis</taxon>
    </lineage>
</organism>
<evidence type="ECO:0000250" key="1"/>
<evidence type="ECO:0000250" key="2">
    <source>
        <dbReference type="UniProtKB" id="Q8IZT6"/>
    </source>
</evidence>
<evidence type="ECO:0000255" key="3"/>
<evidence type="ECO:0000255" key="4">
    <source>
        <dbReference type="PROSITE-ProRule" id="PRU00044"/>
    </source>
</evidence>
<evidence type="ECO:0000255" key="5">
    <source>
        <dbReference type="PROSITE-ProRule" id="PRU00116"/>
    </source>
</evidence>
<evidence type="ECO:0000256" key="6">
    <source>
        <dbReference type="SAM" id="MobiDB-lite"/>
    </source>
</evidence>
<keyword id="KW-0112">Calmodulin-binding</keyword>
<keyword id="KW-0131">Cell cycle</keyword>
<keyword id="KW-0132">Cell division</keyword>
<keyword id="KW-0175">Coiled coil</keyword>
<keyword id="KW-0963">Cytoplasm</keyword>
<keyword id="KW-0206">Cytoskeleton</keyword>
<keyword id="KW-0498">Mitosis</keyword>
<keyword id="KW-0539">Nucleus</keyword>
<keyword id="KW-0597">Phosphoprotein</keyword>
<keyword id="KW-1185">Reference proteome</keyword>
<keyword id="KW-0677">Repeat</keyword>
<reference key="1">
    <citation type="journal article" date="2004" name="Hum. Mol. Genet.">
        <title>Adaptive evolution of ASPM, a major determinant of cerebral cortical size in humans.</title>
        <authorList>
            <person name="Evans P.D."/>
            <person name="Anderson J.R."/>
            <person name="Vallender E.J."/>
            <person name="Gilbert S.L."/>
            <person name="Malcom C.M."/>
            <person name="Dorus S."/>
            <person name="Lahn B.T."/>
        </authorList>
    </citation>
    <scope>NUCLEOTIDE SEQUENCE [MRNA]</scope>
</reference>
<feature type="chain" id="PRO_0000191330" description="Abnormal spindle-like microcephaly-associated protein homolog">
    <location>
        <begin position="1"/>
        <end position="3461" status="greater than"/>
    </location>
</feature>
<feature type="domain" description="Calponin-homology (CH) 1" evidence="4">
    <location>
        <begin position="921"/>
        <end position="1057"/>
    </location>
</feature>
<feature type="domain" description="Calponin-homology (CH) 2" evidence="4">
    <location>
        <begin position="1111"/>
        <end position="1262"/>
    </location>
</feature>
<feature type="domain" description="IQ 1" evidence="5">
    <location>
        <begin position="1267"/>
        <end position="1296"/>
    </location>
</feature>
<feature type="domain" description="IQ 2" evidence="5">
    <location>
        <begin position="1348"/>
        <end position="1379"/>
    </location>
</feature>
<feature type="domain" description="IQ 3" evidence="5">
    <location>
        <begin position="1488"/>
        <end position="1517"/>
    </location>
</feature>
<feature type="domain" description="IQ 4" evidence="5">
    <location>
        <begin position="1511"/>
        <end position="1540"/>
    </location>
</feature>
<feature type="domain" description="IQ 5" evidence="5">
    <location>
        <begin position="1538"/>
        <end position="1569"/>
    </location>
</feature>
<feature type="domain" description="IQ 6" evidence="5">
    <location>
        <begin position="1583"/>
        <end position="1614"/>
    </location>
</feature>
<feature type="domain" description="IQ 7" evidence="5">
    <location>
        <begin position="1633"/>
        <end position="1662"/>
    </location>
</feature>
<feature type="domain" description="IQ 8" evidence="5">
    <location>
        <begin position="1656"/>
        <end position="1685"/>
    </location>
</feature>
<feature type="domain" description="IQ 9" evidence="5">
    <location>
        <begin position="1729"/>
        <end position="1758"/>
    </location>
</feature>
<feature type="domain" description="IQ 10" evidence="5">
    <location>
        <begin position="1752"/>
        <end position="1783"/>
    </location>
</feature>
<feature type="domain" description="IQ 11" evidence="5">
    <location>
        <begin position="1775"/>
        <end position="1804"/>
    </location>
</feature>
<feature type="domain" description="IQ 12" evidence="5">
    <location>
        <begin position="1802"/>
        <end position="1831"/>
    </location>
</feature>
<feature type="domain" description="IQ 13" evidence="5">
    <location>
        <begin position="1825"/>
        <end position="1854"/>
    </location>
</feature>
<feature type="domain" description="IQ 14" evidence="5">
    <location>
        <begin position="1875"/>
        <end position="1904"/>
    </location>
</feature>
<feature type="domain" description="IQ 15" evidence="5">
    <location>
        <begin position="1898"/>
        <end position="1929"/>
    </location>
</feature>
<feature type="domain" description="IQ 16" evidence="5">
    <location>
        <begin position="1948"/>
        <end position="1979"/>
    </location>
</feature>
<feature type="domain" description="IQ 17" evidence="5">
    <location>
        <begin position="1971"/>
        <end position="2002"/>
    </location>
</feature>
<feature type="domain" description="IQ 18" evidence="5">
    <location>
        <begin position="2021"/>
        <end position="2050"/>
    </location>
</feature>
<feature type="domain" description="IQ 19" evidence="5">
    <location>
        <begin position="2044"/>
        <end position="2075"/>
    </location>
</feature>
<feature type="domain" description="IQ 20" evidence="5">
    <location>
        <begin position="2094"/>
        <end position="2125"/>
    </location>
</feature>
<feature type="domain" description="IQ 21" evidence="5">
    <location>
        <begin position="2117"/>
        <end position="2148"/>
    </location>
</feature>
<feature type="domain" description="IQ 22" evidence="5">
    <location>
        <begin position="2167"/>
        <end position="2198"/>
    </location>
</feature>
<feature type="domain" description="IQ 23" evidence="5">
    <location>
        <begin position="2190"/>
        <end position="2219"/>
    </location>
</feature>
<feature type="domain" description="IQ 24" evidence="5">
    <location>
        <begin position="2240"/>
        <end position="2271"/>
    </location>
</feature>
<feature type="domain" description="IQ 25" evidence="5">
    <location>
        <begin position="2313"/>
        <end position="2344"/>
    </location>
</feature>
<feature type="domain" description="IQ 26" evidence="5">
    <location>
        <begin position="2336"/>
        <end position="2367"/>
    </location>
</feature>
<feature type="domain" description="IQ 27" evidence="5">
    <location>
        <begin position="2386"/>
        <end position="2417"/>
    </location>
</feature>
<feature type="domain" description="IQ 28" evidence="5">
    <location>
        <begin position="2409"/>
        <end position="2440"/>
    </location>
</feature>
<feature type="domain" description="IQ 29" evidence="5">
    <location>
        <begin position="2459"/>
        <end position="2490"/>
    </location>
</feature>
<feature type="domain" description="IQ 30" evidence="5">
    <location>
        <begin position="2532"/>
        <end position="2563"/>
    </location>
</feature>
<feature type="domain" description="IQ 31" evidence="5">
    <location>
        <begin position="2666"/>
        <end position="2697"/>
    </location>
</feature>
<feature type="domain" description="IQ 32" evidence="5">
    <location>
        <begin position="2689"/>
        <end position="2720"/>
    </location>
</feature>
<feature type="domain" description="IQ 33" evidence="5">
    <location>
        <begin position="2739"/>
        <end position="2768"/>
    </location>
</feature>
<feature type="domain" description="IQ 34" evidence="5">
    <location>
        <begin position="2837"/>
        <end position="2866"/>
    </location>
</feature>
<feature type="domain" description="IQ 35" evidence="5">
    <location>
        <begin position="2860"/>
        <end position="2891"/>
    </location>
</feature>
<feature type="domain" description="IQ 36" evidence="5">
    <location>
        <begin position="2910"/>
        <end position="2939"/>
    </location>
</feature>
<feature type="domain" description="IQ 37" evidence="5">
    <location>
        <begin position="2933"/>
        <end position="2964"/>
    </location>
</feature>
<feature type="domain" description="IQ 38" evidence="5">
    <location>
        <begin position="2955"/>
        <end position="2986"/>
    </location>
</feature>
<feature type="domain" description="IQ 39" evidence="5">
    <location>
        <begin position="3030"/>
        <end position="3059"/>
    </location>
</feature>
<feature type="domain" description="IQ 40" evidence="5">
    <location>
        <begin position="3080"/>
        <end position="3111"/>
    </location>
</feature>
<feature type="domain" description="IQ 41" evidence="5">
    <location>
        <begin position="3182"/>
        <end position="3211"/>
    </location>
</feature>
<feature type="domain" description="IQ 42" evidence="5">
    <location>
        <begin position="3205"/>
        <end position="3236"/>
    </location>
</feature>
<feature type="region of interest" description="Disordered" evidence="6">
    <location>
        <begin position="1"/>
        <end position="30"/>
    </location>
</feature>
<feature type="coiled-coil region" evidence="3">
    <location>
        <begin position="1058"/>
        <end position="1077"/>
    </location>
</feature>
<feature type="modified residue" description="Phosphoserine" evidence="2">
    <location>
        <position position="279"/>
    </location>
</feature>
<feature type="modified residue" description="Phosphoserine" evidence="2">
    <location>
        <position position="282"/>
    </location>
</feature>
<feature type="modified residue" description="Phosphoserine" evidence="2">
    <location>
        <position position="367"/>
    </location>
</feature>
<feature type="modified residue" description="Phosphoserine" evidence="2">
    <location>
        <position position="392"/>
    </location>
</feature>
<feature type="modified residue" description="Phosphoserine" evidence="2">
    <location>
        <position position="426"/>
    </location>
</feature>
<feature type="modified residue" description="Phosphoserine" evidence="2">
    <location>
        <position position="606"/>
    </location>
</feature>
<feature type="modified residue" description="Phosphoserine" evidence="2">
    <location>
        <position position="1104"/>
    </location>
</feature>
<feature type="non-terminal residue">
    <location>
        <position position="3461"/>
    </location>
</feature>
<comment type="function">
    <text evidence="1">Probable role in mitotic spindle regulation and coordination of mitotic processes. May have a preferential role in regulating neurogenesis (By similarity).</text>
</comment>
<comment type="subcellular location">
    <subcellularLocation>
        <location evidence="1">Cytoplasm</location>
    </subcellularLocation>
    <subcellularLocation>
        <location evidence="1">Cytoplasm</location>
        <location evidence="1">Cytoskeleton</location>
        <location evidence="1">Spindle</location>
    </subcellularLocation>
    <subcellularLocation>
        <location evidence="1">Nucleus</location>
    </subcellularLocation>
    <text evidence="1">The nuclear-cytoplasmic distribution could be regulated by the availability of calmodulin. Localizes to spindle poles during mitosis (By similarity).</text>
</comment>
<gene>
    <name type="primary">ASPM</name>
</gene>
<protein>
    <recommendedName>
        <fullName>Abnormal spindle-like microcephaly-associated protein homolog</fullName>
    </recommendedName>
</protein>
<dbReference type="EMBL" id="AY485420">
    <property type="protein sequence ID" value="AAR98741.1"/>
    <property type="molecule type" value="mRNA"/>
</dbReference>
<dbReference type="FunCoup" id="P62288">
    <property type="interactions" value="1"/>
</dbReference>
<dbReference type="STRING" id="9685.ENSFCAP00000023229"/>
<dbReference type="PaxDb" id="9685-ENSFCAP00000023229"/>
<dbReference type="eggNOG" id="KOG0165">
    <property type="taxonomic scope" value="Eukaryota"/>
</dbReference>
<dbReference type="InParanoid" id="P62288"/>
<dbReference type="Proteomes" id="UP000011712">
    <property type="component" value="Unplaced"/>
</dbReference>
<dbReference type="GO" id="GO:0005737">
    <property type="term" value="C:cytoplasm"/>
    <property type="evidence" value="ECO:0007669"/>
    <property type="project" value="UniProtKB-SubCell"/>
</dbReference>
<dbReference type="GO" id="GO:0005634">
    <property type="term" value="C:nucleus"/>
    <property type="evidence" value="ECO:0007669"/>
    <property type="project" value="UniProtKB-SubCell"/>
</dbReference>
<dbReference type="GO" id="GO:0000922">
    <property type="term" value="C:spindle pole"/>
    <property type="evidence" value="ECO:0000318"/>
    <property type="project" value="GO_Central"/>
</dbReference>
<dbReference type="GO" id="GO:0005516">
    <property type="term" value="F:calmodulin binding"/>
    <property type="evidence" value="ECO:0000318"/>
    <property type="project" value="GO_Central"/>
</dbReference>
<dbReference type="GO" id="GO:0051301">
    <property type="term" value="P:cell division"/>
    <property type="evidence" value="ECO:0007669"/>
    <property type="project" value="UniProtKB-KW"/>
</dbReference>
<dbReference type="GO" id="GO:0051295">
    <property type="term" value="P:establishment of meiotic spindle localization"/>
    <property type="evidence" value="ECO:0000318"/>
    <property type="project" value="GO_Central"/>
</dbReference>
<dbReference type="GO" id="GO:0000278">
    <property type="term" value="P:mitotic cell cycle"/>
    <property type="evidence" value="ECO:0000318"/>
    <property type="project" value="GO_Central"/>
</dbReference>
<dbReference type="GO" id="GO:0007051">
    <property type="term" value="P:spindle organization"/>
    <property type="evidence" value="ECO:0000318"/>
    <property type="project" value="GO_Central"/>
</dbReference>
<dbReference type="CDD" id="cd21223">
    <property type="entry name" value="CH_ASPM_rpt1"/>
    <property type="match status" value="1"/>
</dbReference>
<dbReference type="CDD" id="cd21224">
    <property type="entry name" value="CH_ASPM_rpt2"/>
    <property type="match status" value="1"/>
</dbReference>
<dbReference type="FunFam" id="1.10.418.10:FF:000051">
    <property type="entry name" value="Abnormal spindle-like microcephaly-associated protein homolog"/>
    <property type="match status" value="1"/>
</dbReference>
<dbReference type="FunFam" id="1.20.5.190:FF:000008">
    <property type="entry name" value="Abnormal spindle-like microcephaly-associated protein homolog"/>
    <property type="match status" value="7"/>
</dbReference>
<dbReference type="FunFam" id="1.20.5.190:FF:000009">
    <property type="entry name" value="Abnormal spindle-like microcephaly-associated protein homolog"/>
    <property type="match status" value="3"/>
</dbReference>
<dbReference type="FunFam" id="1.20.5.190:FF:000010">
    <property type="entry name" value="Abnormal spindle-like microcephaly-associated protein homolog"/>
    <property type="match status" value="2"/>
</dbReference>
<dbReference type="FunFam" id="1.20.5.190:FF:000016">
    <property type="entry name" value="Abnormal spindle-like microcephaly-associated protein homolog"/>
    <property type="match status" value="1"/>
</dbReference>
<dbReference type="FunFam" id="1.20.5.190:FF:000030">
    <property type="entry name" value="Abnormal spindle-like microcephaly-associated protein homolog"/>
    <property type="match status" value="1"/>
</dbReference>
<dbReference type="FunFam" id="1.20.5.190:FF:000032">
    <property type="entry name" value="Abnormal spindle-like microcephaly-associated protein homolog"/>
    <property type="match status" value="1"/>
</dbReference>
<dbReference type="FunFam" id="1.20.5.190:FF:000059">
    <property type="entry name" value="Abnormal spindle-like microcephaly-associated protein homolog"/>
    <property type="match status" value="1"/>
</dbReference>
<dbReference type="FunFam" id="2.60.40.10:FF:001429">
    <property type="entry name" value="Abnormal spindle-like microcephaly-associated protein homolog"/>
    <property type="match status" value="1"/>
</dbReference>
<dbReference type="Gene3D" id="1.20.5.190">
    <property type="match status" value="32"/>
</dbReference>
<dbReference type="Gene3D" id="1.10.418.10">
    <property type="entry name" value="Calponin-like domain"/>
    <property type="match status" value="2"/>
</dbReference>
<dbReference type="Gene3D" id="2.60.40.10">
    <property type="entry name" value="Immunoglobulins"/>
    <property type="match status" value="1"/>
</dbReference>
<dbReference type="InterPro" id="IPR016024">
    <property type="entry name" value="ARM-type_fold"/>
</dbReference>
<dbReference type="InterPro" id="IPR031549">
    <property type="entry name" value="ASH"/>
</dbReference>
<dbReference type="InterPro" id="IPR051185">
    <property type="entry name" value="ASPM"/>
</dbReference>
<dbReference type="InterPro" id="IPR001715">
    <property type="entry name" value="CH_dom"/>
</dbReference>
<dbReference type="InterPro" id="IPR036872">
    <property type="entry name" value="CH_dom_sf"/>
</dbReference>
<dbReference type="InterPro" id="IPR013783">
    <property type="entry name" value="Ig-like_fold"/>
</dbReference>
<dbReference type="InterPro" id="IPR000048">
    <property type="entry name" value="IQ_motif_EF-hand-BS"/>
</dbReference>
<dbReference type="InterPro" id="IPR027417">
    <property type="entry name" value="P-loop_NTPase"/>
</dbReference>
<dbReference type="PANTHER" id="PTHR22706">
    <property type="entry name" value="ASSEMBLY FACTOR FOR SPINDLE MICROTUBULES"/>
    <property type="match status" value="1"/>
</dbReference>
<dbReference type="PANTHER" id="PTHR22706:SF1">
    <property type="entry name" value="ASSEMBLY FACTOR FOR SPINDLE MICROTUBULES"/>
    <property type="match status" value="1"/>
</dbReference>
<dbReference type="Pfam" id="PF15780">
    <property type="entry name" value="ASH"/>
    <property type="match status" value="1"/>
</dbReference>
<dbReference type="Pfam" id="PF00307">
    <property type="entry name" value="CH"/>
    <property type="match status" value="1"/>
</dbReference>
<dbReference type="Pfam" id="PF00612">
    <property type="entry name" value="IQ"/>
    <property type="match status" value="36"/>
</dbReference>
<dbReference type="SMART" id="SM00033">
    <property type="entry name" value="CH"/>
    <property type="match status" value="2"/>
</dbReference>
<dbReference type="SMART" id="SM00015">
    <property type="entry name" value="IQ"/>
    <property type="match status" value="66"/>
</dbReference>
<dbReference type="SUPFAM" id="SSF48371">
    <property type="entry name" value="ARM repeat"/>
    <property type="match status" value="1"/>
</dbReference>
<dbReference type="SUPFAM" id="SSF47576">
    <property type="entry name" value="Calponin-homology domain, CH-domain"/>
    <property type="match status" value="1"/>
</dbReference>
<dbReference type="SUPFAM" id="SSF52540">
    <property type="entry name" value="P-loop containing nucleoside triphosphate hydrolases"/>
    <property type="match status" value="16"/>
</dbReference>
<dbReference type="PROSITE" id="PS50021">
    <property type="entry name" value="CH"/>
    <property type="match status" value="2"/>
</dbReference>
<dbReference type="PROSITE" id="PS50096">
    <property type="entry name" value="IQ"/>
    <property type="match status" value="42"/>
</dbReference>
<accession>P62288</accession>
<name>ASPM_FELCA</name>